<gene>
    <name type="primary">NXF1</name>
</gene>
<evidence type="ECO:0000250" key="1"/>
<evidence type="ECO:0000250" key="2">
    <source>
        <dbReference type="UniProtKB" id="Q99JX7"/>
    </source>
</evidence>
<evidence type="ECO:0000250" key="3">
    <source>
        <dbReference type="UniProtKB" id="Q9UBU9"/>
    </source>
</evidence>
<evidence type="ECO:0000255" key="4">
    <source>
        <dbReference type="PROSITE-ProRule" id="PRU00137"/>
    </source>
</evidence>
<evidence type="ECO:0000255" key="5">
    <source>
        <dbReference type="PROSITE-ProRule" id="PRU00611"/>
    </source>
</evidence>
<evidence type="ECO:0000256" key="6">
    <source>
        <dbReference type="SAM" id="MobiDB-lite"/>
    </source>
</evidence>
<evidence type="ECO:0000305" key="7"/>
<reference key="1">
    <citation type="submission" date="2004-11" db="EMBL/GenBank/DDBJ databases">
        <authorList>
            <consortium name="The German cDNA consortium"/>
        </authorList>
    </citation>
    <scope>NUCLEOTIDE SEQUENCE [LARGE SCALE MRNA]</scope>
    <source>
        <tissue>Brain cortex</tissue>
    </source>
</reference>
<feature type="initiator methionine" description="Removed" evidence="3">
    <location>
        <position position="1"/>
    </location>
</feature>
<feature type="chain" id="PRO_0000270917" description="Nuclear RNA export factor 1">
    <location>
        <begin position="2"/>
        <end position="626"/>
    </location>
</feature>
<feature type="domain" description="RRM">
    <location>
        <begin position="119"/>
        <end position="198"/>
    </location>
</feature>
<feature type="repeat" description="LRR 1">
    <location>
        <begin position="266"/>
        <end position="291"/>
    </location>
</feature>
<feature type="repeat" description="LRR 2">
    <location>
        <begin position="292"/>
        <end position="315"/>
    </location>
</feature>
<feature type="repeat" description="LRR 3">
    <location>
        <begin position="316"/>
        <end position="350"/>
    </location>
</feature>
<feature type="repeat" description="LRR 4">
    <location>
        <begin position="351"/>
        <end position="378"/>
    </location>
</feature>
<feature type="domain" description="NTF2" evidence="4">
    <location>
        <begin position="393"/>
        <end position="543"/>
    </location>
</feature>
<feature type="domain" description="TAP-C" evidence="5">
    <location>
        <begin position="572"/>
        <end position="626"/>
    </location>
</feature>
<feature type="region of interest" description="Disordered" evidence="6">
    <location>
        <begin position="1"/>
        <end position="85"/>
    </location>
</feature>
<feature type="region of interest" description="Interaction with ALYREF/THOC4 and LUZP4" evidence="3">
    <location>
        <begin position="2"/>
        <end position="198"/>
    </location>
</feature>
<feature type="region of interest" description="RNA-binding (RBD)" evidence="1">
    <location>
        <begin position="2"/>
        <end position="118"/>
    </location>
</feature>
<feature type="region of interest" description="Minor non-specific RNA-binding" evidence="1">
    <location>
        <begin position="2"/>
        <end position="60"/>
    </location>
</feature>
<feature type="region of interest" description="Major non-specific RNA-binding" evidence="1">
    <location>
        <begin position="61"/>
        <end position="118"/>
    </location>
</feature>
<feature type="region of interest" description="RNA binding" evidence="1">
    <location>
        <begin position="61"/>
        <end position="118"/>
    </location>
</feature>
<feature type="short sequence motif" description="Nuclear localization signal" evidence="1">
    <location>
        <begin position="67"/>
        <end position="100"/>
    </location>
</feature>
<feature type="short sequence motif" description="Nuclear export signal" evidence="1">
    <location>
        <begin position="83"/>
        <end position="110"/>
    </location>
</feature>
<feature type="compositionally biased region" description="Basic and acidic residues" evidence="6">
    <location>
        <begin position="1"/>
        <end position="16"/>
    </location>
</feature>
<feature type="compositionally biased region" description="Basic residues" evidence="6">
    <location>
        <begin position="20"/>
        <end position="29"/>
    </location>
</feature>
<feature type="modified residue" description="N-acetylalanine" evidence="3">
    <location>
        <position position="2"/>
    </location>
</feature>
<feature type="modified residue" description="Phosphoserine" evidence="3">
    <location>
        <position position="9"/>
    </location>
</feature>
<feature type="modified residue" description="Asymmetric dimethylarginine; alternate" evidence="2">
    <location>
        <position position="42"/>
    </location>
</feature>
<feature type="modified residue" description="Omega-N-methylarginine; alternate" evidence="2">
    <location>
        <position position="42"/>
    </location>
</feature>
<feature type="modified residue" description="3'-nitrotyrosine" evidence="2">
    <location>
        <position position="126"/>
    </location>
</feature>
<accession>Q5R752</accession>
<sequence>MADEGKSYSEHDDERVNFPQRKKKGRGPFRWKYGEGNRRSGRGGSGIRSSRLEEDDGDVAMSDAQDGPRVRYNPYTTRPNRRGDAWHDRDRIHVTVRRDRAPPERGGAGTSQDGTSKNWFKITIPYGRKYDKAWLLSMIQSKCSVPFTPIEFHYENTRAQFFVEDASTASALKAVNYKILDRENRRISIIINPSAPPHTILNELKPEQVEQLKLIMSKRYDGSQQALDLKGLRSDPDLVSQNIDVVLNRRSCMAATLRVIEENIPELLSLNLSHNRLYRLDDMSSIVQKVPNLKILNLSGNELKSERELDKIKGLKLEELWLDGNSLCDTFRDQSTYIRSVVACVSAIRERFPKLLRLDGHELPPPIAFDVEAPTTLPPCKGSYFGTENLKSLVLHFLQQYYAIYDSGDRQGLLDAYHDGACCSLSIPFIPQNPARSSLAEYFKDSRNVKKLKDPTLRFRLLKHTRLNVVAFLNELPKTQHDVNSFVVDISAQTSTLPCFSVNGVFKEVDGKSRDSLRAFTRTFIAVPASNSGLCIVNDELFVRNASSEEIQRAFAMPAPTPSSSPVPTLSPEQQEMLQAFSTQSGMNLEWSQKCLQDNNWDYTRSAQAFTHLKAKGEIPEVAFMK</sequence>
<name>NXF1_PONAB</name>
<organism>
    <name type="scientific">Pongo abelii</name>
    <name type="common">Sumatran orangutan</name>
    <name type="synonym">Pongo pygmaeus abelii</name>
    <dbReference type="NCBI Taxonomy" id="9601"/>
    <lineage>
        <taxon>Eukaryota</taxon>
        <taxon>Metazoa</taxon>
        <taxon>Chordata</taxon>
        <taxon>Craniata</taxon>
        <taxon>Vertebrata</taxon>
        <taxon>Euteleostomi</taxon>
        <taxon>Mammalia</taxon>
        <taxon>Eutheria</taxon>
        <taxon>Euarchontoglires</taxon>
        <taxon>Primates</taxon>
        <taxon>Haplorrhini</taxon>
        <taxon>Catarrhini</taxon>
        <taxon>Hominidae</taxon>
        <taxon>Pongo</taxon>
    </lineage>
</organism>
<protein>
    <recommendedName>
        <fullName>Nuclear RNA export factor 1</fullName>
    </recommendedName>
</protein>
<keyword id="KW-0007">Acetylation</keyword>
<keyword id="KW-0963">Cytoplasm</keyword>
<keyword id="KW-0433">Leucine-rich repeat</keyword>
<keyword id="KW-0488">Methylation</keyword>
<keyword id="KW-0509">mRNA transport</keyword>
<keyword id="KW-0944">Nitration</keyword>
<keyword id="KW-0539">Nucleus</keyword>
<keyword id="KW-0597">Phosphoprotein</keyword>
<keyword id="KW-1185">Reference proteome</keyword>
<keyword id="KW-0677">Repeat</keyword>
<keyword id="KW-0694">RNA-binding</keyword>
<keyword id="KW-0813">Transport</keyword>
<comment type="function">
    <text evidence="3">Involved in the nuclear export of mRNA species bearing retroviral constitutive transport elements (CTE) and in the export of mRNA from the nucleus to the cytoplasm (TAP/NFX1 pathway). The NXF1-NXT1 heterodimer is involved in the export of HSP70 mRNA in conjunction with ALYREF/THOC4 and THOC5 components of the TREX complex. ALYREF/THOC4-bound mRNA is thought to be transferred to the NXF1-NXT1 heterodimer for export. Also involved in nuclear export of m6A-containing mRNAs: interaction between SRSF3 and YTHDC1 facilitates m6A-containing mRNA-binding to both SRSF3 and NXF1, promoting mRNA nuclear export.</text>
</comment>
<comment type="subunit">
    <text evidence="3">Heterodimer (via NTF2 domain) with NXT1. The formation of NXF1-NXT1 heterodimers is required for the NXF1-mediated nuclear mRNA export. Forms a complex with RANBP2/NUP358, NXT1 and RANGAP1. Associates with the exon junction complex (EJC) and with the transcription/export (TREX) complex. Found in a mRNA complex with UPF3A and UPF3B. Found in a post-splicing complex with RBM8A, UPF1, UPF2, UPF3A, UPF3B and RNPS1. Interacts (via N-terminus) with DHX9 (via N-terminus); this interaction is direct and negatively regulates NXF1-mediated nuclear export of constitutive transport element (CTE)-containing cellular mRNAs. Interacts with ALYREF/THOC4. Interacts with FYTTD1/UIF. Interacts with EIF4A3. Interacts with NUPL2. Interacts with THOC5. Interacts with CHTOP. Interacts with FRG1 (via N-terminus). Interacts with LUZP4. Interacts with FMR1; the interaction occurs in a mRNA-dependent and polyribosomes-independent manner in the nucleus. Interacts with CPSF6 (via N-terminus); this interaction is direct. Interacts with RBM15. Interacts with RBM15B. Interacts with MCM3AP; this interaction is not mediated by RNA (By similarity).</text>
</comment>
<comment type="subcellular location">
    <subcellularLocation>
        <location evidence="3">Nucleus</location>
        <location evidence="3">Nucleoplasm</location>
    </subcellularLocation>
    <subcellularLocation>
        <location evidence="3">Nucleus speckle</location>
    </subcellularLocation>
    <subcellularLocation>
        <location evidence="3">Cytoplasm</location>
    </subcellularLocation>
    <subcellularLocation>
        <location evidence="3">Nucleus</location>
    </subcellularLocation>
    <text evidence="3">Localized predominantly in the nucleoplasm and at both the nucleoplasmic and cytoplasmic faces of the nuclear pore complex. Shuttles between the nucleus and the cytoplasm. Travels to the cytoplasm as part of the exon junction complex (EJC) bound to mRNA. The association with the TREX complex seems to occur in regions surrounding nuclear speckles known as perispeckles. Nucleus; nuclear rim.</text>
</comment>
<comment type="domain">
    <text evidence="3">The minimal CTE binding domain consists of an RNP-type RNA binding domain (RBD) and leucine-rich repeats.</text>
</comment>
<comment type="domain">
    <text evidence="3">The nucleoporin binding domain consists of a NTF2 domain (also called NTF2-like domain) and a TAP-C domain (also called UBA-like domain). It has 2 nucleoporin-FG-repeats binding sites (one in the NTF2 and the other in the TAP-C domain) which contribute to nucleoporin association and act synergistically to export cellular mRNAs.</text>
</comment>
<comment type="domain">
    <text evidence="3">The NTF2 domain is functional only in the presence of NXT1 and is essential for the export of mRNA from the nucleus. It inhibits RNA binding activity through an intramolecular interaction with the N-terminal RNA binding domain (RBD); the inhibition is removed by an association with the TREX complex, specifically involving ALYREF/THOC4 and THOC5.</text>
</comment>
<comment type="domain">
    <text evidence="3">The TAP-C domain mediates direct interactions with nucleoporin-FG-repeats and is necessary and sufficient for localization of NXF1 to the nuclear rim. The conserved loop 594-NWD-596 of the TAP-C domain has a critical role in the interaction with nucleoporins.</text>
</comment>
<comment type="domain">
    <text evidence="3">The leucine-rich repeats are essential for the export of mRNA from the nucleus.</text>
</comment>
<comment type="domain">
    <text evidence="3">The RNA-binding domain is a non-canonical RNP-type domain.</text>
</comment>
<comment type="similarity">
    <text evidence="7">Belongs to the NXF family.</text>
</comment>
<dbReference type="EMBL" id="CR860266">
    <property type="protein sequence ID" value="CAH92408.1"/>
    <property type="molecule type" value="Transcribed_RNA"/>
</dbReference>
<dbReference type="BMRB" id="Q5R752"/>
<dbReference type="SMR" id="Q5R752"/>
<dbReference type="FunCoup" id="Q5R752">
    <property type="interactions" value="3635"/>
</dbReference>
<dbReference type="STRING" id="9601.ENSPPYP00000003631"/>
<dbReference type="eggNOG" id="KOG3763">
    <property type="taxonomic scope" value="Eukaryota"/>
</dbReference>
<dbReference type="InParanoid" id="Q5R752"/>
<dbReference type="Proteomes" id="UP000001595">
    <property type="component" value="Unplaced"/>
</dbReference>
<dbReference type="GO" id="GO:0005737">
    <property type="term" value="C:cytoplasm"/>
    <property type="evidence" value="ECO:0000250"/>
    <property type="project" value="UniProtKB"/>
</dbReference>
<dbReference type="GO" id="GO:0016607">
    <property type="term" value="C:nuclear speck"/>
    <property type="evidence" value="ECO:0000250"/>
    <property type="project" value="UniProtKB"/>
</dbReference>
<dbReference type="GO" id="GO:0005634">
    <property type="term" value="C:nucleus"/>
    <property type="evidence" value="ECO:0000250"/>
    <property type="project" value="UniProtKB"/>
</dbReference>
<dbReference type="GO" id="GO:0003723">
    <property type="term" value="F:RNA binding"/>
    <property type="evidence" value="ECO:0007669"/>
    <property type="project" value="UniProtKB-KW"/>
</dbReference>
<dbReference type="GO" id="GO:0006406">
    <property type="term" value="P:mRNA export from nucleus"/>
    <property type="evidence" value="ECO:0000250"/>
    <property type="project" value="UniProtKB"/>
</dbReference>
<dbReference type="GO" id="GO:0016973">
    <property type="term" value="P:poly(A)+ mRNA export from nucleus"/>
    <property type="evidence" value="ECO:0007669"/>
    <property type="project" value="TreeGrafter"/>
</dbReference>
<dbReference type="CDD" id="cd00780">
    <property type="entry name" value="NTF2"/>
    <property type="match status" value="1"/>
</dbReference>
<dbReference type="CDD" id="cd14342">
    <property type="entry name" value="UBA_TAP-C"/>
    <property type="match status" value="1"/>
</dbReference>
<dbReference type="FunFam" id="1.10.8.10:FF:000018">
    <property type="entry name" value="Nuclear RNA export factor 1"/>
    <property type="match status" value="1"/>
</dbReference>
<dbReference type="FunFam" id="3.10.450.50:FF:000004">
    <property type="entry name" value="Nuclear RNA export factor 1"/>
    <property type="match status" value="1"/>
</dbReference>
<dbReference type="FunFam" id="3.80.10.10:FF:000066">
    <property type="entry name" value="Nuclear RNA export factor 1"/>
    <property type="match status" value="1"/>
</dbReference>
<dbReference type="FunFam" id="3.30.70.330:FF:000165">
    <property type="entry name" value="nuclear RNA export factor 1"/>
    <property type="match status" value="1"/>
</dbReference>
<dbReference type="Gene3D" id="3.10.450.50">
    <property type="match status" value="1"/>
</dbReference>
<dbReference type="Gene3D" id="3.30.70.330">
    <property type="match status" value="1"/>
</dbReference>
<dbReference type="Gene3D" id="1.10.8.10">
    <property type="entry name" value="DNA helicase RuvA subunit, C-terminal domain"/>
    <property type="match status" value="1"/>
</dbReference>
<dbReference type="Gene3D" id="3.80.10.10">
    <property type="entry name" value="Ribonuclease Inhibitor"/>
    <property type="match status" value="1"/>
</dbReference>
<dbReference type="InterPro" id="IPR001611">
    <property type="entry name" value="Leu-rich_rpt"/>
</dbReference>
<dbReference type="InterPro" id="IPR032675">
    <property type="entry name" value="LRR_dom_sf"/>
</dbReference>
<dbReference type="InterPro" id="IPR032710">
    <property type="entry name" value="NTF2-like_dom_sf"/>
</dbReference>
<dbReference type="InterPro" id="IPR002075">
    <property type="entry name" value="NTF2_dom"/>
</dbReference>
<dbReference type="InterPro" id="IPR018222">
    <property type="entry name" value="Nuclear_transport_factor_2_euk"/>
</dbReference>
<dbReference type="InterPro" id="IPR012677">
    <property type="entry name" value="Nucleotide-bd_a/b_plait_sf"/>
</dbReference>
<dbReference type="InterPro" id="IPR030217">
    <property type="entry name" value="NXF_fam"/>
</dbReference>
<dbReference type="InterPro" id="IPR035979">
    <property type="entry name" value="RBD_domain_sf"/>
</dbReference>
<dbReference type="InterPro" id="IPR005637">
    <property type="entry name" value="TAP_C_dom"/>
</dbReference>
<dbReference type="InterPro" id="IPR015245">
    <property type="entry name" value="Tap_RNA-bd"/>
</dbReference>
<dbReference type="InterPro" id="IPR009060">
    <property type="entry name" value="UBA-like_sf"/>
</dbReference>
<dbReference type="PANTHER" id="PTHR10662">
    <property type="entry name" value="NUCLEAR RNA EXPORT FACTOR"/>
    <property type="match status" value="1"/>
</dbReference>
<dbReference type="PANTHER" id="PTHR10662:SF27">
    <property type="entry name" value="NUCLEAR RNA EXPORT FACTOR 1"/>
    <property type="match status" value="1"/>
</dbReference>
<dbReference type="Pfam" id="PF24048">
    <property type="entry name" value="LRR_NXF1-5"/>
    <property type="match status" value="1"/>
</dbReference>
<dbReference type="Pfam" id="PF22602">
    <property type="entry name" value="NXF_NTF2"/>
    <property type="match status" value="1"/>
</dbReference>
<dbReference type="Pfam" id="PF09162">
    <property type="entry name" value="Tap-RNA_bind"/>
    <property type="match status" value="1"/>
</dbReference>
<dbReference type="Pfam" id="PF03943">
    <property type="entry name" value="TAP_C"/>
    <property type="match status" value="1"/>
</dbReference>
<dbReference type="SMART" id="SM00804">
    <property type="entry name" value="TAP_C"/>
    <property type="match status" value="1"/>
</dbReference>
<dbReference type="SUPFAM" id="SSF52058">
    <property type="entry name" value="L domain-like"/>
    <property type="match status" value="1"/>
</dbReference>
<dbReference type="SUPFAM" id="SSF54427">
    <property type="entry name" value="NTF2-like"/>
    <property type="match status" value="1"/>
</dbReference>
<dbReference type="SUPFAM" id="SSF54928">
    <property type="entry name" value="RNA-binding domain, RBD"/>
    <property type="match status" value="1"/>
</dbReference>
<dbReference type="SUPFAM" id="SSF46934">
    <property type="entry name" value="UBA-like"/>
    <property type="match status" value="1"/>
</dbReference>
<dbReference type="PROSITE" id="PS51450">
    <property type="entry name" value="LRR"/>
    <property type="match status" value="3"/>
</dbReference>
<dbReference type="PROSITE" id="PS50177">
    <property type="entry name" value="NTF2_DOMAIN"/>
    <property type="match status" value="1"/>
</dbReference>
<dbReference type="PROSITE" id="PS51281">
    <property type="entry name" value="TAP_C"/>
    <property type="match status" value="1"/>
</dbReference>
<proteinExistence type="inferred from homology"/>